<comment type="function">
    <text evidence="1">Hydrolyzes trehalose to glucose. Could be involved, in cells returning to low osmolarity conditions, in the utilization of the accumulated cytoplasmic trehalose, which was synthesized in response to high osmolarity.</text>
</comment>
<comment type="catalytic activity">
    <reaction evidence="1">
        <text>alpha,alpha-trehalose + H2O = alpha-D-glucose + beta-D-glucose</text>
        <dbReference type="Rhea" id="RHEA:32675"/>
        <dbReference type="ChEBI" id="CHEBI:15377"/>
        <dbReference type="ChEBI" id="CHEBI:15903"/>
        <dbReference type="ChEBI" id="CHEBI:16551"/>
        <dbReference type="ChEBI" id="CHEBI:17925"/>
        <dbReference type="EC" id="3.2.1.28"/>
    </reaction>
</comment>
<comment type="pathway">
    <text evidence="1">Glycan degradation; trehalose degradation; D-glucose from alpha,alpha-trehalose: step 1/1.</text>
</comment>
<comment type="subunit">
    <text evidence="1">Monomer.</text>
</comment>
<comment type="subcellular location">
    <subcellularLocation>
        <location evidence="1">Cytoplasm</location>
    </subcellularLocation>
</comment>
<comment type="similarity">
    <text evidence="1">Belongs to the glycosyl hydrolase 37 family.</text>
</comment>
<proteinExistence type="inferred from homology"/>
<keyword id="KW-0963">Cytoplasm</keyword>
<keyword id="KW-0326">Glycosidase</keyword>
<keyword id="KW-0378">Hydrolase</keyword>
<feature type="chain" id="PRO_1000064441" description="Cytoplasmic trehalase">
    <location>
        <begin position="1"/>
        <end position="549"/>
    </location>
</feature>
<feature type="active site" description="Proton donor/acceptor" evidence="1">
    <location>
        <position position="326"/>
    </location>
</feature>
<feature type="active site" description="Proton donor/acceptor" evidence="1">
    <location>
        <position position="509"/>
    </location>
</feature>
<feature type="binding site" evidence="1">
    <location>
        <position position="168"/>
    </location>
    <ligand>
        <name>substrate</name>
    </ligand>
</feature>
<feature type="binding site" evidence="1">
    <location>
        <begin position="175"/>
        <end position="176"/>
    </location>
    <ligand>
        <name>substrate</name>
    </ligand>
</feature>
<feature type="binding site" evidence="1">
    <location>
        <position position="212"/>
    </location>
    <ligand>
        <name>substrate</name>
    </ligand>
</feature>
<feature type="binding site" evidence="1">
    <location>
        <begin position="221"/>
        <end position="223"/>
    </location>
    <ligand>
        <name>substrate</name>
    </ligand>
</feature>
<feature type="binding site" evidence="1">
    <location>
        <begin position="292"/>
        <end position="294"/>
    </location>
    <ligand>
        <name>substrate</name>
    </ligand>
</feature>
<feature type="binding site" evidence="1">
    <location>
        <position position="324"/>
    </location>
    <ligand>
        <name>substrate</name>
    </ligand>
</feature>
<feature type="binding site" evidence="1">
    <location>
        <position position="525"/>
    </location>
    <ligand>
        <name>substrate</name>
    </ligand>
</feature>
<name>TREF_ECOHS</name>
<protein>
    <recommendedName>
        <fullName evidence="1">Cytoplasmic trehalase</fullName>
        <ecNumber evidence="1">3.2.1.28</ecNumber>
    </recommendedName>
    <alternativeName>
        <fullName evidence="1">Alpha,alpha-trehalase</fullName>
    </alternativeName>
    <alternativeName>
        <fullName evidence="1">Alpha,alpha-trehalose glucohydrolase</fullName>
    </alternativeName>
</protein>
<organism>
    <name type="scientific">Escherichia coli O9:H4 (strain HS)</name>
    <dbReference type="NCBI Taxonomy" id="331112"/>
    <lineage>
        <taxon>Bacteria</taxon>
        <taxon>Pseudomonadati</taxon>
        <taxon>Pseudomonadota</taxon>
        <taxon>Gammaproteobacteria</taxon>
        <taxon>Enterobacterales</taxon>
        <taxon>Enterobacteriaceae</taxon>
        <taxon>Escherichia</taxon>
    </lineage>
</organism>
<sequence>MLNQKIQNPNPDELMIEVDLCYELDPYELKLDEMIEAEPEPEMIEGLPASDALTPADRYLELFEHVQSAKIFPDSKTFPDCAPKMDPLDILIRYRKVRRHRDFDLRKFVENHFWLPEVYSSEYVSDPQNSLKEHIDQLWPVLTREPQDHIPWSSLLALPQSYIVPGGRFSETYYWDSYFTMLGLAESGREDLLKCMADNFAWMIENYGHIPNGNRTYYLSRSQPPVFALMVELFEEDGVRGARRYLDHLKMEYAFWMDGAESLIPNQAYRHVVRMPDGSLLNRYWDDRDTPRDESWLEDVETAKHSGRPPNEVYRDLRAGAASGWDYSSRWLRDTGRLASIRTTQFIPIDLNAFLFKLESAIANISALKGEKETEALFRQKASARRDAVNRYLWDDENGIYRDYDWRREQLALFSAAAIVPLYVGMANHEQADRLANAVRSRLLTPGGILASEYETGEQWDKPNGWAPLQWMAIQGFKMYGDDLLGDEIARSWLKTVNQFYLEQHKMIEKYHIADGVPREGGGGEYPLQDGFGWTNGVVRRLIGLYGEP</sequence>
<gene>
    <name evidence="1" type="primary">treF</name>
    <name type="ordered locus">EcHS_A3722</name>
</gene>
<dbReference type="EC" id="3.2.1.28" evidence="1"/>
<dbReference type="EMBL" id="CP000802">
    <property type="protein sequence ID" value="ABV07933.1"/>
    <property type="molecule type" value="Genomic_DNA"/>
</dbReference>
<dbReference type="RefSeq" id="WP_000934218.1">
    <property type="nucleotide sequence ID" value="NC_009800.1"/>
</dbReference>
<dbReference type="SMR" id="A8A5X9"/>
<dbReference type="CAZy" id="GH37">
    <property type="family name" value="Glycoside Hydrolase Family 37"/>
</dbReference>
<dbReference type="KEGG" id="ecx:EcHS_A3722"/>
<dbReference type="HOGENOM" id="CLU_006451_3_1_6"/>
<dbReference type="UniPathway" id="UPA00300">
    <property type="reaction ID" value="UER00535"/>
</dbReference>
<dbReference type="GO" id="GO:0005737">
    <property type="term" value="C:cytoplasm"/>
    <property type="evidence" value="ECO:0007669"/>
    <property type="project" value="UniProtKB-SubCell"/>
</dbReference>
<dbReference type="GO" id="GO:0004555">
    <property type="term" value="F:alpha,alpha-trehalase activity"/>
    <property type="evidence" value="ECO:0007669"/>
    <property type="project" value="UniProtKB-UniRule"/>
</dbReference>
<dbReference type="GO" id="GO:0071474">
    <property type="term" value="P:cellular hyperosmotic response"/>
    <property type="evidence" value="ECO:0007669"/>
    <property type="project" value="InterPro"/>
</dbReference>
<dbReference type="GO" id="GO:0005993">
    <property type="term" value="P:trehalose catabolic process"/>
    <property type="evidence" value="ECO:0007669"/>
    <property type="project" value="UniProtKB-UniRule"/>
</dbReference>
<dbReference type="FunFam" id="1.50.10.10:FF:000003">
    <property type="entry name" value="Cytoplasmic trehalase"/>
    <property type="match status" value="1"/>
</dbReference>
<dbReference type="Gene3D" id="1.50.10.10">
    <property type="match status" value="1"/>
</dbReference>
<dbReference type="HAMAP" id="MF_01059">
    <property type="entry name" value="Cyt_trehalase"/>
    <property type="match status" value="1"/>
</dbReference>
<dbReference type="InterPro" id="IPR008928">
    <property type="entry name" value="6-hairpin_glycosidase_sf"/>
</dbReference>
<dbReference type="InterPro" id="IPR012341">
    <property type="entry name" value="6hp_glycosidase-like_sf"/>
</dbReference>
<dbReference type="InterPro" id="IPR023715">
    <property type="entry name" value="Cyt_trehalase"/>
</dbReference>
<dbReference type="InterPro" id="IPR001661">
    <property type="entry name" value="Glyco_hydro_37"/>
</dbReference>
<dbReference type="InterPro" id="IPR018232">
    <property type="entry name" value="Glyco_hydro_37_CS"/>
</dbReference>
<dbReference type="NCBIfam" id="NF009773">
    <property type="entry name" value="PRK13270.1"/>
    <property type="match status" value="1"/>
</dbReference>
<dbReference type="NCBIfam" id="NF009774">
    <property type="entry name" value="PRK13271.1"/>
    <property type="match status" value="1"/>
</dbReference>
<dbReference type="PANTHER" id="PTHR23403:SF8">
    <property type="entry name" value="CYTOPLASMIC TREHALASE"/>
    <property type="match status" value="1"/>
</dbReference>
<dbReference type="PANTHER" id="PTHR23403">
    <property type="entry name" value="TREHALASE"/>
    <property type="match status" value="1"/>
</dbReference>
<dbReference type="Pfam" id="PF01204">
    <property type="entry name" value="Trehalase"/>
    <property type="match status" value="1"/>
</dbReference>
<dbReference type="PRINTS" id="PR00744">
    <property type="entry name" value="GLHYDRLASE37"/>
</dbReference>
<dbReference type="SUPFAM" id="SSF48208">
    <property type="entry name" value="Six-hairpin glycosidases"/>
    <property type="match status" value="1"/>
</dbReference>
<dbReference type="PROSITE" id="PS00927">
    <property type="entry name" value="TREHALASE_1"/>
    <property type="match status" value="1"/>
</dbReference>
<dbReference type="PROSITE" id="PS00928">
    <property type="entry name" value="TREHALASE_2"/>
    <property type="match status" value="1"/>
</dbReference>
<evidence type="ECO:0000255" key="1">
    <source>
        <dbReference type="HAMAP-Rule" id="MF_01059"/>
    </source>
</evidence>
<accession>A8A5X9</accession>
<reference key="1">
    <citation type="journal article" date="2008" name="J. Bacteriol.">
        <title>The pangenome structure of Escherichia coli: comparative genomic analysis of E. coli commensal and pathogenic isolates.</title>
        <authorList>
            <person name="Rasko D.A."/>
            <person name="Rosovitz M.J."/>
            <person name="Myers G.S.A."/>
            <person name="Mongodin E.F."/>
            <person name="Fricke W.F."/>
            <person name="Gajer P."/>
            <person name="Crabtree J."/>
            <person name="Sebaihia M."/>
            <person name="Thomson N.R."/>
            <person name="Chaudhuri R."/>
            <person name="Henderson I.R."/>
            <person name="Sperandio V."/>
            <person name="Ravel J."/>
        </authorList>
    </citation>
    <scope>NUCLEOTIDE SEQUENCE [LARGE SCALE GENOMIC DNA]</scope>
    <source>
        <strain>HS</strain>
    </source>
</reference>